<accession>Q54J38</accession>
<keyword id="KW-0472">Membrane</keyword>
<keyword id="KW-1185">Reference proteome</keyword>
<keyword id="KW-0812">Transmembrane</keyword>
<keyword id="KW-1133">Transmembrane helix</keyword>
<protein>
    <recommendedName>
        <fullName>Dolichyl-diphosphooligosaccharide--protein glycosyltransferase subunit OST5</fullName>
        <shortName>Oligosaccharyl transferase subunit OST5</shortName>
    </recommendedName>
    <alternativeName>
        <fullName>Transmembrane protein 258 homolog</fullName>
    </alternativeName>
</protein>
<sequence>MALVPYTSPLDIVFYPVCAFLFCVIGFAFFATFIVSEMTTAKAQKNIFRELTLALIASMSLGLGLFFVLLAGGIYV</sequence>
<comment type="function">
    <text evidence="1">Subunit of the oligosaccharyl transferase (OST) complex that catalyzes the initial transfer of a defined glycan (Glc(3)Man(9)GlcNAc(2) in eukaryotes) from the lipid carrier dolichol-pyrophosphate to an asparagine residue within an Asn-X-Ser/Thr consensus motif in nascent polypeptide chains, the first step in protein N-glycosylation. N-glycosylation occurs cotranslationally and the complex associates with the Sec61 complex at the channel-forming translocon complex that mediates protein translocation across the endoplasmic reticulum (ER). All subunits are required for a maximal enzyme activity.</text>
</comment>
<comment type="subunit">
    <text evidence="1">Component of the oligosaccharyltransferase (OST) complex.</text>
</comment>
<comment type="subcellular location">
    <subcellularLocation>
        <location evidence="3">Membrane</location>
        <topology evidence="3">Multi-pass membrane protein</topology>
    </subcellularLocation>
</comment>
<comment type="similarity">
    <text evidence="3">Belongs to the OST5 family.</text>
</comment>
<dbReference type="EMBL" id="AAFI02000111">
    <property type="protein sequence ID" value="EAL63259.1"/>
    <property type="molecule type" value="Genomic_DNA"/>
</dbReference>
<dbReference type="RefSeq" id="XP_636763.1">
    <property type="nucleotide sequence ID" value="XM_631671.1"/>
</dbReference>
<dbReference type="SMR" id="Q54J38"/>
<dbReference type="FunCoup" id="Q54J38">
    <property type="interactions" value="13"/>
</dbReference>
<dbReference type="STRING" id="44689.Q54J38"/>
<dbReference type="PaxDb" id="44689-DDB0304383"/>
<dbReference type="EnsemblProtists" id="EAL63259">
    <property type="protein sequence ID" value="EAL63259"/>
    <property type="gene ID" value="DDB_G0288325"/>
</dbReference>
<dbReference type="GeneID" id="8626566"/>
<dbReference type="KEGG" id="ddi:DDB_G0288325"/>
<dbReference type="dictyBase" id="DDB_G0288325"/>
<dbReference type="VEuPathDB" id="AmoebaDB:DDB_G0288325"/>
<dbReference type="eggNOG" id="KOG4452">
    <property type="taxonomic scope" value="Eukaryota"/>
</dbReference>
<dbReference type="HOGENOM" id="CLU_180449_1_0_1"/>
<dbReference type="InParanoid" id="Q54J38"/>
<dbReference type="OMA" id="TAFFYIC"/>
<dbReference type="PhylomeDB" id="Q54J38"/>
<dbReference type="PRO" id="PR:Q54J38"/>
<dbReference type="Proteomes" id="UP000002195">
    <property type="component" value="Chromosome 5"/>
</dbReference>
<dbReference type="GO" id="GO:0005789">
    <property type="term" value="C:endoplasmic reticulum membrane"/>
    <property type="evidence" value="ECO:0000318"/>
    <property type="project" value="GO_Central"/>
</dbReference>
<dbReference type="GO" id="GO:0008250">
    <property type="term" value="C:oligosaccharyltransferase complex"/>
    <property type="evidence" value="ECO:0007669"/>
    <property type="project" value="InterPro"/>
</dbReference>
<dbReference type="GO" id="GO:0062062">
    <property type="term" value="F:oligosaccharyltransferase complex binding"/>
    <property type="evidence" value="ECO:0000318"/>
    <property type="project" value="GO_Central"/>
</dbReference>
<dbReference type="GO" id="GO:0034976">
    <property type="term" value="P:response to endoplasmic reticulum stress"/>
    <property type="evidence" value="ECO:0000318"/>
    <property type="project" value="GO_Central"/>
</dbReference>
<dbReference type="InterPro" id="IPR007915">
    <property type="entry name" value="TMEM258/Ost5"/>
</dbReference>
<dbReference type="PANTHER" id="PTHR13636">
    <property type="entry name" value="TRANSMEMBRANE PROTEIN 258"/>
    <property type="match status" value="1"/>
</dbReference>
<dbReference type="Pfam" id="PF05251">
    <property type="entry name" value="Ost5"/>
    <property type="match status" value="1"/>
</dbReference>
<organism>
    <name type="scientific">Dictyostelium discoideum</name>
    <name type="common">Social amoeba</name>
    <dbReference type="NCBI Taxonomy" id="44689"/>
    <lineage>
        <taxon>Eukaryota</taxon>
        <taxon>Amoebozoa</taxon>
        <taxon>Evosea</taxon>
        <taxon>Eumycetozoa</taxon>
        <taxon>Dictyostelia</taxon>
        <taxon>Dictyosteliales</taxon>
        <taxon>Dictyosteliaceae</taxon>
        <taxon>Dictyostelium</taxon>
    </lineage>
</organism>
<feature type="chain" id="PRO_0000328310" description="Dolichyl-diphosphooligosaccharide--protein glycosyltransferase subunit OST5">
    <location>
        <begin position="1"/>
        <end position="76"/>
    </location>
</feature>
<feature type="transmembrane region" description="Helical" evidence="2">
    <location>
        <begin position="14"/>
        <end position="34"/>
    </location>
</feature>
<feature type="transmembrane region" description="Helical" evidence="2">
    <location>
        <begin position="54"/>
        <end position="74"/>
    </location>
</feature>
<name>OST5_DICDI</name>
<reference key="1">
    <citation type="journal article" date="2005" name="Nature">
        <title>The genome of the social amoeba Dictyostelium discoideum.</title>
        <authorList>
            <person name="Eichinger L."/>
            <person name="Pachebat J.A."/>
            <person name="Gloeckner G."/>
            <person name="Rajandream M.A."/>
            <person name="Sucgang R."/>
            <person name="Berriman M."/>
            <person name="Song J."/>
            <person name="Olsen R."/>
            <person name="Szafranski K."/>
            <person name="Xu Q."/>
            <person name="Tunggal B."/>
            <person name="Kummerfeld S."/>
            <person name="Madera M."/>
            <person name="Konfortov B.A."/>
            <person name="Rivero F."/>
            <person name="Bankier A.T."/>
            <person name="Lehmann R."/>
            <person name="Hamlin N."/>
            <person name="Davies R."/>
            <person name="Gaudet P."/>
            <person name="Fey P."/>
            <person name="Pilcher K."/>
            <person name="Chen G."/>
            <person name="Saunders D."/>
            <person name="Sodergren E.J."/>
            <person name="Davis P."/>
            <person name="Kerhornou A."/>
            <person name="Nie X."/>
            <person name="Hall N."/>
            <person name="Anjard C."/>
            <person name="Hemphill L."/>
            <person name="Bason N."/>
            <person name="Farbrother P."/>
            <person name="Desany B."/>
            <person name="Just E."/>
            <person name="Morio T."/>
            <person name="Rost R."/>
            <person name="Churcher C.M."/>
            <person name="Cooper J."/>
            <person name="Haydock S."/>
            <person name="van Driessche N."/>
            <person name="Cronin A."/>
            <person name="Goodhead I."/>
            <person name="Muzny D.M."/>
            <person name="Mourier T."/>
            <person name="Pain A."/>
            <person name="Lu M."/>
            <person name="Harper D."/>
            <person name="Lindsay R."/>
            <person name="Hauser H."/>
            <person name="James K.D."/>
            <person name="Quiles M."/>
            <person name="Madan Babu M."/>
            <person name="Saito T."/>
            <person name="Buchrieser C."/>
            <person name="Wardroper A."/>
            <person name="Felder M."/>
            <person name="Thangavelu M."/>
            <person name="Johnson D."/>
            <person name="Knights A."/>
            <person name="Loulseged H."/>
            <person name="Mungall K.L."/>
            <person name="Oliver K."/>
            <person name="Price C."/>
            <person name="Quail M.A."/>
            <person name="Urushihara H."/>
            <person name="Hernandez J."/>
            <person name="Rabbinowitsch E."/>
            <person name="Steffen D."/>
            <person name="Sanders M."/>
            <person name="Ma J."/>
            <person name="Kohara Y."/>
            <person name="Sharp S."/>
            <person name="Simmonds M.N."/>
            <person name="Spiegler S."/>
            <person name="Tivey A."/>
            <person name="Sugano S."/>
            <person name="White B."/>
            <person name="Walker D."/>
            <person name="Woodward J.R."/>
            <person name="Winckler T."/>
            <person name="Tanaka Y."/>
            <person name="Shaulsky G."/>
            <person name="Schleicher M."/>
            <person name="Weinstock G.M."/>
            <person name="Rosenthal A."/>
            <person name="Cox E.C."/>
            <person name="Chisholm R.L."/>
            <person name="Gibbs R.A."/>
            <person name="Loomis W.F."/>
            <person name="Platzer M."/>
            <person name="Kay R.R."/>
            <person name="Williams J.G."/>
            <person name="Dear P.H."/>
            <person name="Noegel A.A."/>
            <person name="Barrell B.G."/>
            <person name="Kuspa A."/>
        </authorList>
    </citation>
    <scope>NUCLEOTIDE SEQUENCE [LARGE SCALE GENOMIC DNA]</scope>
    <source>
        <strain>AX4</strain>
    </source>
</reference>
<evidence type="ECO:0000250" key="1">
    <source>
        <dbReference type="UniProtKB" id="Q92316"/>
    </source>
</evidence>
<evidence type="ECO:0000255" key="2"/>
<evidence type="ECO:0000305" key="3"/>
<gene>
    <name type="ORF">DDB_G0288325</name>
</gene>
<proteinExistence type="inferred from homology"/>